<dbReference type="EC" id="1.14.13.9" evidence="1"/>
<dbReference type="EMBL" id="CP000050">
    <property type="protein sequence ID" value="AAY49731.1"/>
    <property type="molecule type" value="Genomic_DNA"/>
</dbReference>
<dbReference type="RefSeq" id="WP_011036736.1">
    <property type="nucleotide sequence ID" value="NZ_CP155948.1"/>
</dbReference>
<dbReference type="SMR" id="Q4UT92"/>
<dbReference type="KEGG" id="xcb:XC_2682"/>
<dbReference type="HOGENOM" id="CLU_023210_0_1_6"/>
<dbReference type="UniPathway" id="UPA00253">
    <property type="reaction ID" value="UER00328"/>
</dbReference>
<dbReference type="Proteomes" id="UP000000420">
    <property type="component" value="Chromosome"/>
</dbReference>
<dbReference type="GO" id="GO:0071949">
    <property type="term" value="F:FAD binding"/>
    <property type="evidence" value="ECO:0007669"/>
    <property type="project" value="InterPro"/>
</dbReference>
<dbReference type="GO" id="GO:0004502">
    <property type="term" value="F:kynurenine 3-monooxygenase activity"/>
    <property type="evidence" value="ECO:0007669"/>
    <property type="project" value="UniProtKB-UniRule"/>
</dbReference>
<dbReference type="GO" id="GO:0043420">
    <property type="term" value="P:anthranilate metabolic process"/>
    <property type="evidence" value="ECO:0007669"/>
    <property type="project" value="UniProtKB-UniRule"/>
</dbReference>
<dbReference type="GO" id="GO:0070189">
    <property type="term" value="P:kynurenine metabolic process"/>
    <property type="evidence" value="ECO:0007669"/>
    <property type="project" value="TreeGrafter"/>
</dbReference>
<dbReference type="GO" id="GO:0006569">
    <property type="term" value="P:L-tryptophan catabolic process"/>
    <property type="evidence" value="ECO:0007669"/>
    <property type="project" value="UniProtKB-UniRule"/>
</dbReference>
<dbReference type="GO" id="GO:0009435">
    <property type="term" value="P:NAD biosynthetic process"/>
    <property type="evidence" value="ECO:0007669"/>
    <property type="project" value="UniProtKB-UniPathway"/>
</dbReference>
<dbReference type="GO" id="GO:0019805">
    <property type="term" value="P:quinolinate biosynthetic process"/>
    <property type="evidence" value="ECO:0007669"/>
    <property type="project" value="UniProtKB-UniRule"/>
</dbReference>
<dbReference type="FunFam" id="3.50.50.60:FF:000185">
    <property type="entry name" value="Kynurenine 3-monooxygenase"/>
    <property type="match status" value="1"/>
</dbReference>
<dbReference type="Gene3D" id="3.50.50.60">
    <property type="entry name" value="FAD/NAD(P)-binding domain"/>
    <property type="match status" value="1"/>
</dbReference>
<dbReference type="HAMAP" id="MF_01971">
    <property type="entry name" value="Kynurenine_monooxygenase"/>
    <property type="match status" value="1"/>
</dbReference>
<dbReference type="InterPro" id="IPR002938">
    <property type="entry name" value="FAD-bd"/>
</dbReference>
<dbReference type="InterPro" id="IPR036188">
    <property type="entry name" value="FAD/NAD-bd_sf"/>
</dbReference>
<dbReference type="InterPro" id="IPR027545">
    <property type="entry name" value="Kynurenine_monooxygenase"/>
</dbReference>
<dbReference type="PANTHER" id="PTHR46028">
    <property type="entry name" value="KYNURENINE 3-MONOOXYGENASE"/>
    <property type="match status" value="1"/>
</dbReference>
<dbReference type="PANTHER" id="PTHR46028:SF2">
    <property type="entry name" value="KYNURENINE 3-MONOOXYGENASE"/>
    <property type="match status" value="1"/>
</dbReference>
<dbReference type="Pfam" id="PF01494">
    <property type="entry name" value="FAD_binding_3"/>
    <property type="match status" value="2"/>
</dbReference>
<dbReference type="PRINTS" id="PR00420">
    <property type="entry name" value="RNGMNOXGNASE"/>
</dbReference>
<dbReference type="SUPFAM" id="SSF51905">
    <property type="entry name" value="FAD/NAD(P)-binding domain"/>
    <property type="match status" value="1"/>
</dbReference>
<evidence type="ECO:0000255" key="1">
    <source>
        <dbReference type="HAMAP-Rule" id="MF_01971"/>
    </source>
</evidence>
<feature type="chain" id="PRO_0000361948" description="Kynurenine 3-monooxygenase">
    <location>
        <begin position="1"/>
        <end position="456"/>
    </location>
</feature>
<comment type="function">
    <text evidence="1">Catalyzes the hydroxylation of L-kynurenine (L-Kyn) to form 3-hydroxy-L-kynurenine (L-3OHKyn). Required for synthesis of quinolinic acid.</text>
</comment>
<comment type="catalytic activity">
    <reaction evidence="1">
        <text>L-kynurenine + NADPH + O2 + H(+) = 3-hydroxy-L-kynurenine + NADP(+) + H2O</text>
        <dbReference type="Rhea" id="RHEA:20545"/>
        <dbReference type="ChEBI" id="CHEBI:15377"/>
        <dbReference type="ChEBI" id="CHEBI:15378"/>
        <dbReference type="ChEBI" id="CHEBI:15379"/>
        <dbReference type="ChEBI" id="CHEBI:57783"/>
        <dbReference type="ChEBI" id="CHEBI:57959"/>
        <dbReference type="ChEBI" id="CHEBI:58125"/>
        <dbReference type="ChEBI" id="CHEBI:58349"/>
        <dbReference type="EC" id="1.14.13.9"/>
    </reaction>
</comment>
<comment type="cofactor">
    <cofactor evidence="1">
        <name>FAD</name>
        <dbReference type="ChEBI" id="CHEBI:57692"/>
    </cofactor>
</comment>
<comment type="pathway">
    <text evidence="1">Cofactor biosynthesis; NAD(+) biosynthesis; quinolinate from L-kynurenine: step 1/3.</text>
</comment>
<comment type="similarity">
    <text evidence="1">Belongs to the aromatic-ring hydroxylase family. KMO subfamily.</text>
</comment>
<sequence>MSAAASPRSLTLIGAGLAGCLLAILLSRRGWQITLYERRGDPRIKGYESGRSINLALAERGRHALRQAGAEDAVMAKAVMMRGRMIHPVSGEPQLQRYGRDDSEVIWSIHRAALNVTLLDLAEQAGARVHFYRRLHTVDFDAGYARFIDDRDDQPHEIHFQALVGSDGAGSALRAAMQRKAPVGEHIAFLDHSYKELEIPPRADGGFRIERNALHIWPRGRYMCIALPNDGGTFTVTLFLPNEGMPSFATTRSGDEALALFARDFPDALPLIPQLKEHWEEHPPGLLGTLTRERWHLDGRAVLLGDAAHAMVPFHGQGMNCAFEDCVALAEQLDAHSDLSEAFAAFEAARRDDAAAIQQMALENYLEMRDRVGDAQFLLQRALEQQLQARWPTRFVPHYTMVTFLRTRYAIALARSEIQREILLEATHGHTDLSRIDWVALETVVHARLEPLEGAH</sequence>
<keyword id="KW-0274">FAD</keyword>
<keyword id="KW-0285">Flavoprotein</keyword>
<keyword id="KW-0503">Monooxygenase</keyword>
<keyword id="KW-0521">NADP</keyword>
<keyword id="KW-0560">Oxidoreductase</keyword>
<keyword id="KW-0662">Pyridine nucleotide biosynthesis</keyword>
<protein>
    <recommendedName>
        <fullName evidence="1">Kynurenine 3-monooxygenase</fullName>
        <ecNumber evidence="1">1.14.13.9</ecNumber>
    </recommendedName>
    <alternativeName>
        <fullName evidence="1">Kynurenine 3-hydroxylase</fullName>
    </alternativeName>
</protein>
<name>KMO_XANC8</name>
<gene>
    <name evidence="1" type="primary">kmo</name>
    <name type="ordered locus">XC_2682</name>
</gene>
<reference key="1">
    <citation type="journal article" date="2005" name="Genome Res.">
        <title>Comparative and functional genomic analyses of the pathogenicity of phytopathogen Xanthomonas campestris pv. campestris.</title>
        <authorList>
            <person name="Qian W."/>
            <person name="Jia Y."/>
            <person name="Ren S.-X."/>
            <person name="He Y.-Q."/>
            <person name="Feng J.-X."/>
            <person name="Lu L.-F."/>
            <person name="Sun Q."/>
            <person name="Ying G."/>
            <person name="Tang D.-J."/>
            <person name="Tang H."/>
            <person name="Wu W."/>
            <person name="Hao P."/>
            <person name="Wang L."/>
            <person name="Jiang B.-L."/>
            <person name="Zeng S."/>
            <person name="Gu W.-Y."/>
            <person name="Lu G."/>
            <person name="Rong L."/>
            <person name="Tian Y."/>
            <person name="Yao Z."/>
            <person name="Fu G."/>
            <person name="Chen B."/>
            <person name="Fang R."/>
            <person name="Qiang B."/>
            <person name="Chen Z."/>
            <person name="Zhao G.-P."/>
            <person name="Tang J.-L."/>
            <person name="He C."/>
        </authorList>
    </citation>
    <scope>NUCLEOTIDE SEQUENCE [LARGE SCALE GENOMIC DNA]</scope>
    <source>
        <strain>8004</strain>
    </source>
</reference>
<accession>Q4UT92</accession>
<organism>
    <name type="scientific">Xanthomonas campestris pv. campestris (strain 8004)</name>
    <dbReference type="NCBI Taxonomy" id="314565"/>
    <lineage>
        <taxon>Bacteria</taxon>
        <taxon>Pseudomonadati</taxon>
        <taxon>Pseudomonadota</taxon>
        <taxon>Gammaproteobacteria</taxon>
        <taxon>Lysobacterales</taxon>
        <taxon>Lysobacteraceae</taxon>
        <taxon>Xanthomonas</taxon>
    </lineage>
</organism>
<proteinExistence type="inferred from homology"/>